<gene>
    <name evidence="1" type="primary">rplA</name>
    <name evidence="1" type="synonym">rpl1</name>
    <name type="ordered locus">sync_2726</name>
</gene>
<dbReference type="EMBL" id="CP000435">
    <property type="protein sequence ID" value="ABI45192.1"/>
    <property type="molecule type" value="Genomic_DNA"/>
</dbReference>
<dbReference type="RefSeq" id="WP_011620618.1">
    <property type="nucleotide sequence ID" value="NC_008319.1"/>
</dbReference>
<dbReference type="SMR" id="Q0I6K8"/>
<dbReference type="STRING" id="64471.sync_2726"/>
<dbReference type="KEGG" id="syg:sync_2726"/>
<dbReference type="eggNOG" id="COG0081">
    <property type="taxonomic scope" value="Bacteria"/>
</dbReference>
<dbReference type="HOGENOM" id="CLU_062853_0_0_3"/>
<dbReference type="OrthoDB" id="9803740at2"/>
<dbReference type="Proteomes" id="UP000001961">
    <property type="component" value="Chromosome"/>
</dbReference>
<dbReference type="GO" id="GO:0015934">
    <property type="term" value="C:large ribosomal subunit"/>
    <property type="evidence" value="ECO:0007669"/>
    <property type="project" value="InterPro"/>
</dbReference>
<dbReference type="GO" id="GO:0019843">
    <property type="term" value="F:rRNA binding"/>
    <property type="evidence" value="ECO:0007669"/>
    <property type="project" value="UniProtKB-UniRule"/>
</dbReference>
<dbReference type="GO" id="GO:0003735">
    <property type="term" value="F:structural constituent of ribosome"/>
    <property type="evidence" value="ECO:0007669"/>
    <property type="project" value="InterPro"/>
</dbReference>
<dbReference type="GO" id="GO:0000049">
    <property type="term" value="F:tRNA binding"/>
    <property type="evidence" value="ECO:0007669"/>
    <property type="project" value="UniProtKB-KW"/>
</dbReference>
<dbReference type="GO" id="GO:0006417">
    <property type="term" value="P:regulation of translation"/>
    <property type="evidence" value="ECO:0007669"/>
    <property type="project" value="UniProtKB-KW"/>
</dbReference>
<dbReference type="GO" id="GO:0006412">
    <property type="term" value="P:translation"/>
    <property type="evidence" value="ECO:0007669"/>
    <property type="project" value="UniProtKB-UniRule"/>
</dbReference>
<dbReference type="CDD" id="cd00403">
    <property type="entry name" value="Ribosomal_L1"/>
    <property type="match status" value="1"/>
</dbReference>
<dbReference type="FunFam" id="3.40.50.790:FF:000001">
    <property type="entry name" value="50S ribosomal protein L1"/>
    <property type="match status" value="1"/>
</dbReference>
<dbReference type="Gene3D" id="3.30.190.20">
    <property type="match status" value="1"/>
</dbReference>
<dbReference type="Gene3D" id="3.40.50.790">
    <property type="match status" value="1"/>
</dbReference>
<dbReference type="HAMAP" id="MF_01318_B">
    <property type="entry name" value="Ribosomal_uL1_B"/>
    <property type="match status" value="1"/>
</dbReference>
<dbReference type="InterPro" id="IPR005878">
    <property type="entry name" value="Ribosom_uL1_bac-type"/>
</dbReference>
<dbReference type="InterPro" id="IPR002143">
    <property type="entry name" value="Ribosomal_uL1"/>
</dbReference>
<dbReference type="InterPro" id="IPR023674">
    <property type="entry name" value="Ribosomal_uL1-like"/>
</dbReference>
<dbReference type="InterPro" id="IPR028364">
    <property type="entry name" value="Ribosomal_uL1/biogenesis"/>
</dbReference>
<dbReference type="InterPro" id="IPR016095">
    <property type="entry name" value="Ribosomal_uL1_3-a/b-sand"/>
</dbReference>
<dbReference type="InterPro" id="IPR023673">
    <property type="entry name" value="Ribosomal_uL1_CS"/>
</dbReference>
<dbReference type="NCBIfam" id="TIGR01169">
    <property type="entry name" value="rplA_bact"/>
    <property type="match status" value="1"/>
</dbReference>
<dbReference type="PANTHER" id="PTHR36427">
    <property type="entry name" value="54S RIBOSOMAL PROTEIN L1, MITOCHONDRIAL"/>
    <property type="match status" value="1"/>
</dbReference>
<dbReference type="PANTHER" id="PTHR36427:SF3">
    <property type="entry name" value="LARGE RIBOSOMAL SUBUNIT PROTEIN UL1M"/>
    <property type="match status" value="1"/>
</dbReference>
<dbReference type="Pfam" id="PF00687">
    <property type="entry name" value="Ribosomal_L1"/>
    <property type="match status" value="1"/>
</dbReference>
<dbReference type="PIRSF" id="PIRSF002155">
    <property type="entry name" value="Ribosomal_L1"/>
    <property type="match status" value="1"/>
</dbReference>
<dbReference type="SUPFAM" id="SSF56808">
    <property type="entry name" value="Ribosomal protein L1"/>
    <property type="match status" value="1"/>
</dbReference>
<dbReference type="PROSITE" id="PS01199">
    <property type="entry name" value="RIBOSOMAL_L1"/>
    <property type="match status" value="1"/>
</dbReference>
<protein>
    <recommendedName>
        <fullName evidence="1">Large ribosomal subunit protein uL1</fullName>
    </recommendedName>
    <alternativeName>
        <fullName evidence="2">50S ribosomal protein L1</fullName>
    </alternativeName>
</protein>
<keyword id="KW-1185">Reference proteome</keyword>
<keyword id="KW-0678">Repressor</keyword>
<keyword id="KW-0687">Ribonucleoprotein</keyword>
<keyword id="KW-0689">Ribosomal protein</keyword>
<keyword id="KW-0694">RNA-binding</keyword>
<keyword id="KW-0699">rRNA-binding</keyword>
<keyword id="KW-0810">Translation regulation</keyword>
<keyword id="KW-0820">tRNA-binding</keyword>
<comment type="function">
    <text evidence="1">Binds directly to 23S rRNA. The L1 stalk is quite mobile in the ribosome, and is involved in E site tRNA release.</text>
</comment>
<comment type="function">
    <text evidence="1">Protein L1 is also a translational repressor protein, it controls the translation of the L11 operon by binding to its mRNA.</text>
</comment>
<comment type="subunit">
    <text evidence="1">Part of the 50S ribosomal subunit.</text>
</comment>
<comment type="similarity">
    <text evidence="1">Belongs to the universal ribosomal protein uL1 family.</text>
</comment>
<accession>Q0I6K8</accession>
<organism>
    <name type="scientific">Synechococcus sp. (strain CC9311)</name>
    <dbReference type="NCBI Taxonomy" id="64471"/>
    <lineage>
        <taxon>Bacteria</taxon>
        <taxon>Bacillati</taxon>
        <taxon>Cyanobacteriota</taxon>
        <taxon>Cyanophyceae</taxon>
        <taxon>Synechococcales</taxon>
        <taxon>Synechococcaceae</taxon>
        <taxon>Synechococcus</taxon>
    </lineage>
</organism>
<feature type="chain" id="PRO_0000308124" description="Large ribosomal subunit protein uL1">
    <location>
        <begin position="1"/>
        <end position="235"/>
    </location>
</feature>
<name>RL1_SYNS3</name>
<sequence length="235" mass="25594">MPKLSKRLASLVTKIEDRAYQPLEAIQLVKENATAKFDETMEAHVRLGIDPKYTDQQLRTTVALPQGTGQTVRIAVITRGEKVAEAKAAGAELSGDEDLVEAISKGEMNFDLLIATPDMMPKVAKLGRVLGPRGLMPNPKAGTVTTDLASAIQEFKAGKLEFRADRTGIVHVRFGKASFTAEALLENLKTLQETIDRNKPSGAKGRYWKSLYVTSTMGPSVEVDIALLQDIEQEG</sequence>
<evidence type="ECO:0000255" key="1">
    <source>
        <dbReference type="HAMAP-Rule" id="MF_01318"/>
    </source>
</evidence>
<evidence type="ECO:0000305" key="2"/>
<proteinExistence type="inferred from homology"/>
<reference key="1">
    <citation type="journal article" date="2006" name="Proc. Natl. Acad. Sci. U.S.A.">
        <title>Genome sequence of Synechococcus CC9311: insights into adaptation to a coastal environment.</title>
        <authorList>
            <person name="Palenik B."/>
            <person name="Ren Q."/>
            <person name="Dupont C.L."/>
            <person name="Myers G.S."/>
            <person name="Heidelberg J.F."/>
            <person name="Badger J.H."/>
            <person name="Madupu R."/>
            <person name="Nelson W.C."/>
            <person name="Brinkac L.M."/>
            <person name="Dodson R.J."/>
            <person name="Durkin A.S."/>
            <person name="Daugherty S.C."/>
            <person name="Sullivan S.A."/>
            <person name="Khouri H."/>
            <person name="Mohamoud Y."/>
            <person name="Halpin R."/>
            <person name="Paulsen I.T."/>
        </authorList>
    </citation>
    <scope>NUCLEOTIDE SEQUENCE [LARGE SCALE GENOMIC DNA]</scope>
    <source>
        <strain>CC9311</strain>
    </source>
</reference>